<name>METF_BUCBP</name>
<dbReference type="EC" id="1.5.1.54" evidence="1"/>
<dbReference type="EMBL" id="AE016826">
    <property type="protein sequence ID" value="AAO26786.1"/>
    <property type="molecule type" value="Genomic_DNA"/>
</dbReference>
<dbReference type="RefSeq" id="WP_011091187.1">
    <property type="nucleotide sequence ID" value="NC_004545.1"/>
</dbReference>
<dbReference type="SMR" id="Q89B13"/>
<dbReference type="STRING" id="224915.bbp_047"/>
<dbReference type="KEGG" id="bab:bbp_047"/>
<dbReference type="eggNOG" id="COG0685">
    <property type="taxonomic scope" value="Bacteria"/>
</dbReference>
<dbReference type="HOGENOM" id="CLU_025841_0_0_6"/>
<dbReference type="OrthoDB" id="9812555at2"/>
<dbReference type="UniPathway" id="UPA00051"/>
<dbReference type="UniPathway" id="UPA00193"/>
<dbReference type="Proteomes" id="UP000000601">
    <property type="component" value="Chromosome"/>
</dbReference>
<dbReference type="GO" id="GO:0005829">
    <property type="term" value="C:cytosol"/>
    <property type="evidence" value="ECO:0007669"/>
    <property type="project" value="InterPro"/>
</dbReference>
<dbReference type="GO" id="GO:0071949">
    <property type="term" value="F:FAD binding"/>
    <property type="evidence" value="ECO:0007669"/>
    <property type="project" value="TreeGrafter"/>
</dbReference>
<dbReference type="GO" id="GO:0106312">
    <property type="term" value="F:methylenetetrahydrofolate reductase (NADH) activity"/>
    <property type="evidence" value="ECO:0007669"/>
    <property type="project" value="RHEA"/>
</dbReference>
<dbReference type="GO" id="GO:0009086">
    <property type="term" value="P:methionine biosynthetic process"/>
    <property type="evidence" value="ECO:0007669"/>
    <property type="project" value="UniProtKB-KW"/>
</dbReference>
<dbReference type="GO" id="GO:0035999">
    <property type="term" value="P:tetrahydrofolate interconversion"/>
    <property type="evidence" value="ECO:0007669"/>
    <property type="project" value="UniProtKB-UniPathway"/>
</dbReference>
<dbReference type="CDD" id="cd00537">
    <property type="entry name" value="MTHFR"/>
    <property type="match status" value="1"/>
</dbReference>
<dbReference type="Gene3D" id="3.20.20.220">
    <property type="match status" value="1"/>
</dbReference>
<dbReference type="InterPro" id="IPR029041">
    <property type="entry name" value="FAD-linked_oxidoreductase-like"/>
</dbReference>
<dbReference type="InterPro" id="IPR003171">
    <property type="entry name" value="Mehydrof_redctse-like"/>
</dbReference>
<dbReference type="InterPro" id="IPR004620">
    <property type="entry name" value="MTHF_reductase_bac"/>
</dbReference>
<dbReference type="NCBIfam" id="TIGR00676">
    <property type="entry name" value="fadh2"/>
    <property type="match status" value="1"/>
</dbReference>
<dbReference type="NCBIfam" id="NF006950">
    <property type="entry name" value="PRK09432.1"/>
    <property type="match status" value="1"/>
</dbReference>
<dbReference type="PANTHER" id="PTHR45754">
    <property type="entry name" value="METHYLENETETRAHYDROFOLATE REDUCTASE"/>
    <property type="match status" value="1"/>
</dbReference>
<dbReference type="PANTHER" id="PTHR45754:SF3">
    <property type="entry name" value="METHYLENETETRAHYDROFOLATE REDUCTASE (NADPH)"/>
    <property type="match status" value="1"/>
</dbReference>
<dbReference type="Pfam" id="PF02219">
    <property type="entry name" value="MTHFR"/>
    <property type="match status" value="1"/>
</dbReference>
<dbReference type="SUPFAM" id="SSF51730">
    <property type="entry name" value="FAD-linked oxidoreductase"/>
    <property type="match status" value="1"/>
</dbReference>
<proteinExistence type="inferred from homology"/>
<feature type="chain" id="PRO_0000190260" description="5,10-methylenetetrahydrofolate reductase">
    <location>
        <begin position="1"/>
        <end position="295"/>
    </location>
</feature>
<feature type="active site" description="Proton donor/acceptor" evidence="1">
    <location>
        <position position="28"/>
    </location>
</feature>
<feature type="binding site" evidence="1">
    <location>
        <position position="59"/>
    </location>
    <ligand>
        <name>NADH</name>
        <dbReference type="ChEBI" id="CHEBI:57945"/>
    </ligand>
</feature>
<feature type="binding site" evidence="1">
    <location>
        <position position="89"/>
    </location>
    <ligand>
        <name>FAD</name>
        <dbReference type="ChEBI" id="CHEBI:57692"/>
    </ligand>
</feature>
<feature type="binding site" evidence="1">
    <location>
        <position position="119"/>
    </location>
    <ligand>
        <name>FAD</name>
        <dbReference type="ChEBI" id="CHEBI:57692"/>
    </ligand>
</feature>
<feature type="binding site" evidence="1">
    <location>
        <position position="120"/>
    </location>
    <ligand>
        <name>FAD</name>
        <dbReference type="ChEBI" id="CHEBI:57692"/>
    </ligand>
</feature>
<feature type="binding site" evidence="1">
    <location>
        <position position="121"/>
    </location>
    <ligand>
        <name>(6S)-5-methyl-5,6,7,8-tetrahydrofolate</name>
        <dbReference type="ChEBI" id="CHEBI:18608"/>
    </ligand>
</feature>
<feature type="binding site" evidence="1">
    <location>
        <position position="121"/>
    </location>
    <ligand>
        <name>FAD</name>
        <dbReference type="ChEBI" id="CHEBI:57692"/>
    </ligand>
</feature>
<feature type="binding site" evidence="1">
    <location>
        <position position="133"/>
    </location>
    <ligand>
        <name>FAD</name>
        <dbReference type="ChEBI" id="CHEBI:57692"/>
    </ligand>
</feature>
<feature type="binding site" evidence="1">
    <location>
        <position position="153"/>
    </location>
    <ligand>
        <name>FAD</name>
        <dbReference type="ChEBI" id="CHEBI:57692"/>
    </ligand>
</feature>
<feature type="binding site" evidence="1">
    <location>
        <position position="157"/>
    </location>
    <ligand>
        <name>FAD</name>
        <dbReference type="ChEBI" id="CHEBI:57692"/>
    </ligand>
</feature>
<feature type="binding site" evidence="1">
    <location>
        <position position="160"/>
    </location>
    <ligand>
        <name>FAD</name>
        <dbReference type="ChEBI" id="CHEBI:57692"/>
    </ligand>
</feature>
<feature type="binding site" evidence="1">
    <location>
        <position position="166"/>
    </location>
    <ligand>
        <name>FAD</name>
        <dbReference type="ChEBI" id="CHEBI:57692"/>
    </ligand>
</feature>
<feature type="binding site" evidence="1">
    <location>
        <position position="169"/>
    </location>
    <ligand>
        <name>FAD</name>
        <dbReference type="ChEBI" id="CHEBI:57692"/>
    </ligand>
</feature>
<feature type="binding site" evidence="1">
    <location>
        <position position="172"/>
    </location>
    <ligand>
        <name>FAD</name>
        <dbReference type="ChEBI" id="CHEBI:57692"/>
    </ligand>
</feature>
<feature type="binding site" evidence="1">
    <location>
        <position position="173"/>
    </location>
    <ligand>
        <name>FAD</name>
        <dbReference type="ChEBI" id="CHEBI:57692"/>
    </ligand>
</feature>
<feature type="binding site" evidence="1">
    <location>
        <position position="184"/>
    </location>
    <ligand>
        <name>(6S)-5-methyl-5,6,7,8-tetrahydrofolate</name>
        <dbReference type="ChEBI" id="CHEBI:18608"/>
    </ligand>
</feature>
<feature type="binding site" evidence="1">
    <location>
        <position position="184"/>
    </location>
    <ligand>
        <name>NADH</name>
        <dbReference type="ChEBI" id="CHEBI:57945"/>
    </ligand>
</feature>
<feature type="binding site" evidence="1">
    <location>
        <position position="220"/>
    </location>
    <ligand>
        <name>(6S)-5-methyl-5,6,7,8-tetrahydrofolate</name>
        <dbReference type="ChEBI" id="CHEBI:18608"/>
    </ligand>
</feature>
<feature type="binding site" evidence="1">
    <location>
        <position position="280"/>
    </location>
    <ligand>
        <name>(6S)-5-methyl-5,6,7,8-tetrahydrofolate</name>
        <dbReference type="ChEBI" id="CHEBI:18608"/>
    </ligand>
</feature>
<comment type="function">
    <text evidence="1">Catalyzes the NADH-dependent reduction of 5,10-methylenetetrahydrofolate to 5-methyltetrahydrofolate. Is required to provide the methyl group necessary for methionine synthetase to convert homocysteine to methionine; the methyl group is given by 5-methyltetrahydrofolate.</text>
</comment>
<comment type="catalytic activity">
    <reaction evidence="1">
        <text>(6S)-5-methyl-5,6,7,8-tetrahydrofolate + NAD(+) = (6R)-5,10-methylene-5,6,7,8-tetrahydrofolate + NADH + H(+)</text>
        <dbReference type="Rhea" id="RHEA:19821"/>
        <dbReference type="ChEBI" id="CHEBI:15378"/>
        <dbReference type="ChEBI" id="CHEBI:15636"/>
        <dbReference type="ChEBI" id="CHEBI:18608"/>
        <dbReference type="ChEBI" id="CHEBI:57540"/>
        <dbReference type="ChEBI" id="CHEBI:57945"/>
        <dbReference type="EC" id="1.5.1.54"/>
    </reaction>
    <physiologicalReaction direction="right-to-left" evidence="1">
        <dbReference type="Rhea" id="RHEA:19823"/>
    </physiologicalReaction>
</comment>
<comment type="cofactor">
    <cofactor evidence="1">
        <name>FAD</name>
        <dbReference type="ChEBI" id="CHEBI:57692"/>
    </cofactor>
</comment>
<comment type="pathway">
    <text>One-carbon metabolism; tetrahydrofolate interconversion.</text>
</comment>
<comment type="pathway">
    <text evidence="1">Amino-acid biosynthesis; L-methionine biosynthesis via de novo pathway.</text>
</comment>
<comment type="similarity">
    <text evidence="2">Belongs to the methylenetetrahydrofolate reductase family.</text>
</comment>
<organism>
    <name type="scientific">Buchnera aphidicola subsp. Baizongia pistaciae (strain Bp)</name>
    <dbReference type="NCBI Taxonomy" id="224915"/>
    <lineage>
        <taxon>Bacteria</taxon>
        <taxon>Pseudomonadati</taxon>
        <taxon>Pseudomonadota</taxon>
        <taxon>Gammaproteobacteria</taxon>
        <taxon>Enterobacterales</taxon>
        <taxon>Erwiniaceae</taxon>
        <taxon>Buchnera</taxon>
    </lineage>
</organism>
<keyword id="KW-0028">Amino-acid biosynthesis</keyword>
<keyword id="KW-0274">FAD</keyword>
<keyword id="KW-0285">Flavoprotein</keyword>
<keyword id="KW-0486">Methionine biosynthesis</keyword>
<keyword id="KW-0520">NAD</keyword>
<keyword id="KW-0560">Oxidoreductase</keyword>
<keyword id="KW-1185">Reference proteome</keyword>
<gene>
    <name type="primary">metF</name>
    <name type="ordered locus">bbp_047</name>
</gene>
<accession>Q89B13</accession>
<protein>
    <recommendedName>
        <fullName>5,10-methylenetetrahydrofolate reductase</fullName>
        <ecNumber evidence="1">1.5.1.54</ecNumber>
    </recommendedName>
</protein>
<reference key="1">
    <citation type="journal article" date="2003" name="Proc. Natl. Acad. Sci. U.S.A.">
        <title>Reductive genome evolution in Buchnera aphidicola.</title>
        <authorList>
            <person name="van Ham R.C.H.J."/>
            <person name="Kamerbeek J."/>
            <person name="Palacios C."/>
            <person name="Rausell C."/>
            <person name="Abascal F."/>
            <person name="Bastolla U."/>
            <person name="Fernandez J.M."/>
            <person name="Jimenez L."/>
            <person name="Postigo M."/>
            <person name="Silva F.J."/>
            <person name="Tamames J."/>
            <person name="Viguera E."/>
            <person name="Latorre A."/>
            <person name="Valencia A."/>
            <person name="Moran F."/>
            <person name="Moya A."/>
        </authorList>
    </citation>
    <scope>NUCLEOTIDE SEQUENCE [LARGE SCALE GENOMIC DNA]</scope>
    <source>
        <strain>Bp</strain>
    </source>
</reference>
<evidence type="ECO:0000250" key="1">
    <source>
        <dbReference type="UniProtKB" id="P0AEZ1"/>
    </source>
</evidence>
<evidence type="ECO:0000305" key="2"/>
<sequence>MKLVYKNYHETLNQHLMNICEKVNISFEFFPPNNILSEKNLWQVIDKLKLLTPKFFSVTHGTNSKIRATCTSNIVKKIKKYTGIETVPHLTCINSTEEELKVIAKTYWDSGIRHILALRGDIFNTNCKPKIYAVDLIKLLKSIANFEISVAAYPEVHPEAVNAKYDIINLKRKVEAGATRAITQFFFNIDCFLRFRDLCVKNNITIDIVPGIFPISNFKQLLKFSSVSNVSIPKWLCCMFHGLDNDLNTSRIIGSSIAIDMVKVLYSEGIRSFHFYTLNKSEISFAICKILENKS</sequence>